<dbReference type="EC" id="3.6.1.23" evidence="12"/>
<dbReference type="EC" id="3.4.23.-" evidence="7 15"/>
<dbReference type="EMBL" id="M12349">
    <property type="status" value="NOT_ANNOTATED_CDS"/>
    <property type="molecule type" value="Genomic_RNA"/>
</dbReference>
<dbReference type="EMBL" id="AF033815">
    <property type="protein sequence ID" value="AAC82574.1"/>
    <property type="molecule type" value="Genomic_RNA"/>
</dbReference>
<dbReference type="PIR" id="B25839">
    <property type="entry name" value="PRLJMP"/>
</dbReference>
<dbReference type="RefSeq" id="NP_056892.1">
    <molecule id="P07570-1"/>
    <property type="nucleotide sequence ID" value="NC_001550.1"/>
</dbReference>
<dbReference type="PDB" id="1NSO">
    <property type="method" value="NMR"/>
    <property type="chains" value="A=163-267"/>
</dbReference>
<dbReference type="PDB" id="2D4L">
    <property type="method" value="X-ray"/>
    <property type="resolution" value="1.70 A"/>
    <property type="chains" value="A=11-162"/>
</dbReference>
<dbReference type="PDB" id="2D4M">
    <property type="method" value="X-ray"/>
    <property type="resolution" value="1.85 A"/>
    <property type="chains" value="A=11-162"/>
</dbReference>
<dbReference type="PDB" id="2D4N">
    <property type="method" value="X-ray"/>
    <property type="resolution" value="1.53 A"/>
    <property type="chains" value="A=11-162"/>
</dbReference>
<dbReference type="PDB" id="3SQF">
    <property type="method" value="X-ray"/>
    <property type="resolution" value="1.63 A"/>
    <property type="chains" value="A/B=163-276"/>
</dbReference>
<dbReference type="PDB" id="3TP1">
    <property type="method" value="X-ray"/>
    <property type="resolution" value="1.60 A"/>
    <property type="chains" value="A=11-162"/>
</dbReference>
<dbReference type="PDB" id="3TPN">
    <property type="method" value="X-ray"/>
    <property type="resolution" value="1.65 A"/>
    <property type="chains" value="A=609-759"/>
</dbReference>
<dbReference type="PDB" id="3TPS">
    <property type="method" value="X-ray"/>
    <property type="resolution" value="1.85 A"/>
    <property type="chains" value="A=609-759"/>
</dbReference>
<dbReference type="PDB" id="3TPW">
    <property type="method" value="X-ray"/>
    <property type="resolution" value="1.65 A"/>
    <property type="chains" value="A=11-162"/>
</dbReference>
<dbReference type="PDB" id="3TPY">
    <property type="method" value="X-ray"/>
    <property type="resolution" value="1.75 A"/>
    <property type="chains" value="A=609-759"/>
</dbReference>
<dbReference type="PDB" id="3TQ3">
    <property type="method" value="X-ray"/>
    <property type="resolution" value="1.85 A"/>
    <property type="chains" value="A=609-759"/>
</dbReference>
<dbReference type="PDB" id="3TQ4">
    <property type="method" value="X-ray"/>
    <property type="resolution" value="1.60 A"/>
    <property type="chains" value="A=609-759"/>
</dbReference>
<dbReference type="PDB" id="3TQ5">
    <property type="method" value="X-ray"/>
    <property type="resolution" value="1.40 A"/>
    <property type="chains" value="A=609-759"/>
</dbReference>
<dbReference type="PDB" id="3TRL">
    <property type="method" value="X-ray"/>
    <property type="resolution" value="1.80 A"/>
    <property type="chains" value="A=609-759"/>
</dbReference>
<dbReference type="PDB" id="3TRN">
    <property type="method" value="X-ray"/>
    <property type="resolution" value="1.83 A"/>
    <property type="chains" value="A=609-759"/>
</dbReference>
<dbReference type="PDB" id="3TS6">
    <property type="method" value="X-ray"/>
    <property type="resolution" value="1.84 A"/>
    <property type="chains" value="A=609-759"/>
</dbReference>
<dbReference type="PDB" id="3TSL">
    <property type="method" value="X-ray"/>
    <property type="resolution" value="2.20 A"/>
    <property type="chains" value="A=609-759"/>
</dbReference>
<dbReference type="PDB" id="3TTA">
    <property type="method" value="X-ray"/>
    <property type="resolution" value="2.00 A"/>
    <property type="chains" value="A=609-759"/>
</dbReference>
<dbReference type="PDB" id="6HWI">
    <property type="method" value="EM"/>
    <property type="resolution" value="7.20 A"/>
    <property type="chains" value="A/B/C=317-516"/>
</dbReference>
<dbReference type="PDBsum" id="1NSO"/>
<dbReference type="PDBsum" id="2D4L"/>
<dbReference type="PDBsum" id="2D4M"/>
<dbReference type="PDBsum" id="2D4N"/>
<dbReference type="PDBsum" id="3SQF"/>
<dbReference type="PDBsum" id="3TP1"/>
<dbReference type="PDBsum" id="3TPN"/>
<dbReference type="PDBsum" id="3TPS"/>
<dbReference type="PDBsum" id="3TPW"/>
<dbReference type="PDBsum" id="3TPY"/>
<dbReference type="PDBsum" id="3TQ3"/>
<dbReference type="PDBsum" id="3TQ4"/>
<dbReference type="PDBsum" id="3TQ5"/>
<dbReference type="PDBsum" id="3TRL"/>
<dbReference type="PDBsum" id="3TRN"/>
<dbReference type="PDBsum" id="3TS6"/>
<dbReference type="PDBsum" id="3TSL"/>
<dbReference type="PDBsum" id="3TTA"/>
<dbReference type="PDBsum" id="6HWI"/>
<dbReference type="BMRB" id="P07570"/>
<dbReference type="SMR" id="P07570"/>
<dbReference type="MEROPS" id="A02.009"/>
<dbReference type="OrthoDB" id="2921at10239"/>
<dbReference type="BRENDA" id="3.4.23.B6">
    <property type="organism ID" value="3195"/>
</dbReference>
<dbReference type="BRENDA" id="3.6.1.23">
    <property type="organism ID" value="3195"/>
</dbReference>
<dbReference type="EvolutionaryTrace" id="P07570"/>
<dbReference type="Proteomes" id="UP000008870">
    <property type="component" value="Genome"/>
</dbReference>
<dbReference type="Proteomes" id="UP000105838">
    <property type="component" value="Genome"/>
</dbReference>
<dbReference type="GO" id="GO:0019013">
    <property type="term" value="C:viral nucleocapsid"/>
    <property type="evidence" value="ECO:0007669"/>
    <property type="project" value="UniProtKB-KW"/>
</dbReference>
<dbReference type="GO" id="GO:0004190">
    <property type="term" value="F:aspartic-type endopeptidase activity"/>
    <property type="evidence" value="ECO:0007669"/>
    <property type="project" value="UniProtKB-KW"/>
</dbReference>
<dbReference type="GO" id="GO:0003677">
    <property type="term" value="F:DNA binding"/>
    <property type="evidence" value="ECO:0007669"/>
    <property type="project" value="UniProtKB-KW"/>
</dbReference>
<dbReference type="GO" id="GO:0004170">
    <property type="term" value="F:dUTP diphosphatase activity"/>
    <property type="evidence" value="ECO:0007669"/>
    <property type="project" value="UniProtKB-EC"/>
</dbReference>
<dbReference type="GO" id="GO:0039660">
    <property type="term" value="F:structural constituent of virion"/>
    <property type="evidence" value="ECO:0007669"/>
    <property type="project" value="UniProtKB-KW"/>
</dbReference>
<dbReference type="GO" id="GO:0008270">
    <property type="term" value="F:zinc ion binding"/>
    <property type="evidence" value="ECO:0007669"/>
    <property type="project" value="UniProtKB-KW"/>
</dbReference>
<dbReference type="GO" id="GO:0009117">
    <property type="term" value="P:nucleotide metabolic process"/>
    <property type="evidence" value="ECO:0007669"/>
    <property type="project" value="UniProtKB-KW"/>
</dbReference>
<dbReference type="GO" id="GO:0006508">
    <property type="term" value="P:proteolysis"/>
    <property type="evidence" value="ECO:0007669"/>
    <property type="project" value="UniProtKB-KW"/>
</dbReference>
<dbReference type="GO" id="GO:0075523">
    <property type="term" value="P:viral translational frameshifting"/>
    <property type="evidence" value="ECO:0007669"/>
    <property type="project" value="UniProtKB-KW"/>
</dbReference>
<dbReference type="CDD" id="cd05482">
    <property type="entry name" value="HIV_retropepsin_like"/>
    <property type="match status" value="1"/>
</dbReference>
<dbReference type="CDD" id="cd07557">
    <property type="entry name" value="trimeric_dUTPase"/>
    <property type="match status" value="1"/>
</dbReference>
<dbReference type="FunFam" id="1.10.150.490:FF:000002">
    <property type="entry name" value="Gag polyprotein"/>
    <property type="match status" value="1"/>
</dbReference>
<dbReference type="FunFam" id="4.10.60.10:FF:000036">
    <property type="entry name" value="Gag polyprotein"/>
    <property type="match status" value="1"/>
</dbReference>
<dbReference type="Gene3D" id="1.10.1200.30">
    <property type="match status" value="1"/>
</dbReference>
<dbReference type="Gene3D" id="2.70.40.10">
    <property type="match status" value="1"/>
</dbReference>
<dbReference type="Gene3D" id="2.40.70.10">
    <property type="entry name" value="Acid Proteases"/>
    <property type="match status" value="1"/>
</dbReference>
<dbReference type="Gene3D" id="1.10.375.10">
    <property type="entry name" value="Human Immunodeficiency Virus Type 1 Capsid Protein"/>
    <property type="match status" value="1"/>
</dbReference>
<dbReference type="Gene3D" id="1.10.150.490">
    <property type="entry name" value="Retroviral GAG p10 protein"/>
    <property type="match status" value="1"/>
</dbReference>
<dbReference type="Gene3D" id="4.10.60.10">
    <property type="entry name" value="Zinc finger, CCHC-type"/>
    <property type="match status" value="1"/>
</dbReference>
<dbReference type="InterPro" id="IPR001969">
    <property type="entry name" value="Aspartic_peptidase_AS"/>
</dbReference>
<dbReference type="InterPro" id="IPR003322">
    <property type="entry name" value="B_retro_matrix"/>
</dbReference>
<dbReference type="InterPro" id="IPR038124">
    <property type="entry name" value="B_retro_matrix_sf"/>
</dbReference>
<dbReference type="InterPro" id="IPR029054">
    <property type="entry name" value="dUTPase-like"/>
</dbReference>
<dbReference type="InterPro" id="IPR036157">
    <property type="entry name" value="dUTPase-like_sf"/>
</dbReference>
<dbReference type="InterPro" id="IPR033704">
    <property type="entry name" value="dUTPase_trimeric"/>
</dbReference>
<dbReference type="InterPro" id="IPR000467">
    <property type="entry name" value="G_patch_dom"/>
</dbReference>
<dbReference type="InterPro" id="IPR045345">
    <property type="entry name" value="Gag_p24_C"/>
</dbReference>
<dbReference type="InterPro" id="IPR001995">
    <property type="entry name" value="Peptidase_A2_cat"/>
</dbReference>
<dbReference type="InterPro" id="IPR021109">
    <property type="entry name" value="Peptidase_aspartic_dom_sf"/>
</dbReference>
<dbReference type="InterPro" id="IPR050195">
    <property type="entry name" value="Primate_lentivir_Gag_pol-like"/>
</dbReference>
<dbReference type="InterPro" id="IPR034170">
    <property type="entry name" value="Retropepsin-like_cat_dom"/>
</dbReference>
<dbReference type="InterPro" id="IPR018061">
    <property type="entry name" value="Retropepsins"/>
</dbReference>
<dbReference type="InterPro" id="IPR008916">
    <property type="entry name" value="Retrov_capsid_C"/>
</dbReference>
<dbReference type="InterPro" id="IPR008919">
    <property type="entry name" value="Retrov_capsid_N"/>
</dbReference>
<dbReference type="InterPro" id="IPR010999">
    <property type="entry name" value="Retrovr_matrix"/>
</dbReference>
<dbReference type="InterPro" id="IPR001878">
    <property type="entry name" value="Znf_CCHC"/>
</dbReference>
<dbReference type="InterPro" id="IPR036875">
    <property type="entry name" value="Znf_CCHC_sf"/>
</dbReference>
<dbReference type="PANTHER" id="PTHR40389">
    <property type="entry name" value="ENDOGENOUS RETROVIRUS GROUP K MEMBER 24 GAG POLYPROTEIN-RELATED"/>
    <property type="match status" value="1"/>
</dbReference>
<dbReference type="PANTHER" id="PTHR40389:SF3">
    <property type="entry name" value="IGE-BINDING PROTEIN"/>
    <property type="match status" value="1"/>
</dbReference>
<dbReference type="Pfam" id="PF00692">
    <property type="entry name" value="dUTPase"/>
    <property type="match status" value="1"/>
</dbReference>
<dbReference type="Pfam" id="PF01585">
    <property type="entry name" value="G-patch"/>
    <property type="match status" value="1"/>
</dbReference>
<dbReference type="Pfam" id="PF02337">
    <property type="entry name" value="Gag_p10"/>
    <property type="match status" value="1"/>
</dbReference>
<dbReference type="Pfam" id="PF00607">
    <property type="entry name" value="Gag_p24"/>
    <property type="match status" value="1"/>
</dbReference>
<dbReference type="Pfam" id="PF19317">
    <property type="entry name" value="Gag_p24_C"/>
    <property type="match status" value="1"/>
</dbReference>
<dbReference type="Pfam" id="PF00077">
    <property type="entry name" value="RVP"/>
    <property type="match status" value="1"/>
</dbReference>
<dbReference type="Pfam" id="PF14787">
    <property type="entry name" value="zf-CCHC_5"/>
    <property type="match status" value="1"/>
</dbReference>
<dbReference type="SMART" id="SM00443">
    <property type="entry name" value="G_patch"/>
    <property type="match status" value="1"/>
</dbReference>
<dbReference type="SMART" id="SM00343">
    <property type="entry name" value="ZnF_C2HC"/>
    <property type="match status" value="2"/>
</dbReference>
<dbReference type="SUPFAM" id="SSF50630">
    <property type="entry name" value="Acid proteases"/>
    <property type="match status" value="1"/>
</dbReference>
<dbReference type="SUPFAM" id="SSF51283">
    <property type="entry name" value="dUTPase-like"/>
    <property type="match status" value="1"/>
</dbReference>
<dbReference type="SUPFAM" id="SSF47836">
    <property type="entry name" value="Retroviral matrix proteins"/>
    <property type="match status" value="1"/>
</dbReference>
<dbReference type="SUPFAM" id="SSF47353">
    <property type="entry name" value="Retrovirus capsid dimerization domain-like"/>
    <property type="match status" value="1"/>
</dbReference>
<dbReference type="SUPFAM" id="SSF47943">
    <property type="entry name" value="Retrovirus capsid protein, N-terminal core domain"/>
    <property type="match status" value="1"/>
</dbReference>
<dbReference type="SUPFAM" id="SSF57756">
    <property type="entry name" value="Retrovirus zinc finger-like domains"/>
    <property type="match status" value="1"/>
</dbReference>
<dbReference type="PROSITE" id="PS50175">
    <property type="entry name" value="ASP_PROT_RETROV"/>
    <property type="match status" value="1"/>
</dbReference>
<dbReference type="PROSITE" id="PS00141">
    <property type="entry name" value="ASP_PROTEASE"/>
    <property type="match status" value="1"/>
</dbReference>
<dbReference type="PROSITE" id="PS50174">
    <property type="entry name" value="G_PATCH"/>
    <property type="match status" value="1"/>
</dbReference>
<dbReference type="PROSITE" id="PS50158">
    <property type="entry name" value="ZF_CCHC"/>
    <property type="match status" value="1"/>
</dbReference>
<accession>P07570</accession>
<accession>O92810</accession>
<comment type="function">
    <molecule>Matrix protein p10</molecule>
    <text evidence="18">Matrix protein.</text>
</comment>
<comment type="function">
    <text evidence="18">Nucleocapsid protein p14: Nucleocapsid protein.</text>
</comment>
<comment type="function">
    <molecule>Capsid protein p27</molecule>
    <text evidence="18">Capsid protein.</text>
</comment>
<comment type="function">
    <molecule>Protease 17 kDa</molecule>
    <text evidence="7 15">The aspartyl protease mediates proteolytic cleavages of Gag and Gag-Pol polyproteins during or shortly after the release of the virion from the plasma membrane. Cleavages take place as an ordered, step-wise cascade to yield mature proteins. This process is called maturation. Displays maximal activity during the budding process just prior to particle release from the cell.</text>
</comment>
<comment type="function">
    <molecule>Protease 13 kDa</molecule>
    <text evidence="7 15">The aspartyl protease mediates proteolytic cleavages of Gag and Gag-Pol polyproteins during or shortly after the release of the virion from the plasma membrane. Cleavages take place as an ordered, step-wise cascade to yield mature proteins. This process is called maturation. Displays maximal activity during the budding process just prior to particle release from the cell.</text>
</comment>
<comment type="function">
    <molecule>G-patch peptide</molecule>
    <text evidence="13">Enhances the activity of the reverse transcriptase. May be part of the mature RT.</text>
</comment>
<comment type="catalytic activity">
    <reaction evidence="12">
        <text>dUTP + H2O = dUMP + diphosphate + H(+)</text>
        <dbReference type="Rhea" id="RHEA:10248"/>
        <dbReference type="ChEBI" id="CHEBI:15377"/>
        <dbReference type="ChEBI" id="CHEBI:15378"/>
        <dbReference type="ChEBI" id="CHEBI:33019"/>
        <dbReference type="ChEBI" id="CHEBI:61555"/>
        <dbReference type="ChEBI" id="CHEBI:246422"/>
        <dbReference type="EC" id="3.6.1.23"/>
    </reaction>
</comment>
<comment type="subunit">
    <molecule>Protease 17 kDa</molecule>
    <text evidence="3">Homodimer (By similarity).</text>
</comment>
<comment type="subunit">
    <molecule>G-patch peptide</molecule>
    <text evidence="13">Interacts with the reverse transcriptase/ribonuclease H (PubMed:22171253).</text>
</comment>
<comment type="subunit">
    <molecule>Nucleocapsid protein-dUTPase</molecule>
    <text evidence="12">Homotrimer (PubMed:17169987).</text>
</comment>
<comment type="subcellular location">
    <molecule>Matrix protein p10</molecule>
    <subcellularLocation>
        <location evidence="18">Virion</location>
    </subcellularLocation>
</comment>
<comment type="subcellular location">
    <molecule>Capsid protein p27</molecule>
    <subcellularLocation>
        <location evidence="18">Virion</location>
    </subcellularLocation>
</comment>
<comment type="subcellular location">
    <molecule>Nucleocapsid protein-dUTPase</molecule>
    <subcellularLocation>
        <location evidence="18">Virion</location>
    </subcellularLocation>
</comment>
<comment type="subcellular location">
    <molecule>Protease 13 kDa</molecule>
    <subcellularLocation>
        <location evidence="15">Virion</location>
    </subcellularLocation>
</comment>
<comment type="subcellular location">
    <molecule>Protease 17 kDa</molecule>
    <subcellularLocation>
        <location evidence="15">Virion</location>
    </subcellularLocation>
</comment>
<comment type="alternative products">
    <event type="ribosomal frameshifting"/>
    <isoform>
        <id>P07570-1</id>
        <name>Gag-Pro polyprotein</name>
        <sequence type="displayed"/>
    </isoform>
    <isoform>
        <id>P07567-1</id>
        <name>Gag polyprotein</name>
        <sequence type="external"/>
    </isoform>
    <isoform>
        <id>P07572-1</id>
        <name>Gag-Pro-Pol polyprotein</name>
        <sequence type="external"/>
    </isoform>
</comment>
<comment type="domain">
    <molecule>Gag-Pro polyprotein</molecule>
    <text evidence="9">Late-budding domains (L domains) are short sequence motifs essential for viral particle release. They can occur individually or in close proximity within structural proteins. They interacts with sorting cellular proteins of the multivesicular body (MVB) pathway. Most of these proteins are class E vacuolar protein sorting factors belonging to ESCRT-I, ESCRT-II or ESCRT-III complexes. Phosphorylated protein pp24 and phosphorylated protein pp18 contains two L domains: a PTAP/PSAP motif which interacts with the UEV domain of TSG101, and a PPXY motif which binds to the WW domains of the ubiquitin ligase NEDD4. Both motifs contribute to viral release. The PSAP motif acts as an additional L domain and promotes the efficient release of the virions but requires an intact PPPY motif to perform its function.</text>
</comment>
<comment type="domain">
    <molecule>Protease 17 kDa</molecule>
    <text evidence="11 13">The glycine-rich G-patch domain (GPD) is present at the C-terminus of the protease from which it is then detached by the protease itself.</text>
</comment>
<comment type="domain">
    <molecule>Capsid protein p27</molecule>
    <text evidence="14">Contains a highly charged, six-helix bundle region at the C-terminus, which is critical in assembly (PubMed:30478053). Upon capsid maturation, the six-helix bundle disassembles and the helical arrangement of the capsid C-terminus is lost (PubMed:30478053).</text>
</comment>
<comment type="PTM">
    <molecule>Protease 17 kDa</molecule>
    <text evidence="10 11 15">Released by autocatalytic processing. The protease can undergo further autoprocessing to yield 2 shorter but enzymatically active forms of 12 kDa and 13 kDa without the GDP domain. the 12 kDa form is monomeric.</text>
</comment>
<comment type="PTM">
    <molecule>Gag-Pro polyprotein</molecule>
    <text evidence="2">Myristoylated. Myristoylation of the matrix (MA) domain mediates the transport and binding of Gag polyproteins to the host plasma membrane and is required for the assembly of viral particles.</text>
</comment>
<comment type="PTM">
    <molecule>Gag-Pro polyprotein</molecule>
    <text evidence="15">Specific enzymatic cleavages in vivo yield mature proteins.</text>
</comment>
<comment type="miscellaneous">
    <molecule>Isoform Gag-Pro polyprotein</molecule>
    <text evidence="19 20">Produced by -1 ribosomal frameshifting between gag-pro.</text>
</comment>
<proteinExistence type="evidence at protein level"/>
<feature type="initiator methionine" description="Removed; by host" evidence="18">
    <location>
        <position position="1"/>
    </location>
</feature>
<feature type="chain" id="PRO_0000199550" description="Gag-Pro polyprotein">
    <location>
        <begin position="2"/>
        <end position="911"/>
    </location>
</feature>
<feature type="chain" id="PRO_0000443190" description="Matrix protein p10">
    <location>
        <begin position="2"/>
        <end position="100"/>
    </location>
</feature>
<feature type="chain" id="PRO_0000443191" description="Phosphorylated protein pp24">
    <location>
        <begin position="101"/>
        <end position="216"/>
    </location>
</feature>
<feature type="propeptide" id="PRO_0000443192" evidence="18">
    <location>
        <begin position="101"/>
        <end position="161"/>
    </location>
</feature>
<feature type="chain" id="PRO_0000443193" description="Phosphorylated protein pp18">
    <location>
        <begin position="162"/>
        <end position="216"/>
    </location>
</feature>
<feature type="chain" id="PRO_0000443194" description="p12">
    <location>
        <begin position="217"/>
        <end position="299"/>
    </location>
</feature>
<feature type="chain" id="PRO_0000443195" description="Capsid protein p27">
    <location>
        <begin position="300"/>
        <end position="525"/>
    </location>
</feature>
<feature type="chain" id="PRO_0000443296" description="Nucleocapsid protein-dUTPase">
    <location>
        <begin position="526"/>
        <end position="759"/>
    </location>
</feature>
<feature type="chain" id="PRO_0000443196" description="Protease 17 kDa">
    <location>
        <begin position="760"/>
        <end position="911"/>
    </location>
</feature>
<feature type="chain" id="PRO_0000443197" description="Protease 13 kDa">
    <location>
        <begin position="760"/>
        <end position="873"/>
    </location>
</feature>
<feature type="peptide" id="PRO_0000443198" description="G-patch peptide">
    <location>
        <begin position="874"/>
        <end position="911"/>
    </location>
</feature>
<feature type="domain" description="Peptidase A2" evidence="7">
    <location>
        <begin position="780"/>
        <end position="856"/>
    </location>
</feature>
<feature type="domain" description="G-patch" evidence="6 13">
    <location>
        <begin position="867"/>
        <end position="911"/>
    </location>
</feature>
<feature type="zinc finger region" description="CCHC-type 1" evidence="5">
    <location>
        <begin position="547"/>
        <end position="564"/>
    </location>
</feature>
<feature type="zinc finger region" description="CCHC-type 2" evidence="5">
    <location>
        <begin position="576"/>
        <end position="593"/>
    </location>
</feature>
<feature type="region of interest" description="Disordered" evidence="8">
    <location>
        <begin position="113"/>
        <end position="178"/>
    </location>
</feature>
<feature type="region of interest" description="Disordered" evidence="8">
    <location>
        <begin position="260"/>
        <end position="279"/>
    </location>
</feature>
<feature type="region of interest" description="Disordered" evidence="8">
    <location>
        <begin position="592"/>
        <end position="626"/>
    </location>
</feature>
<feature type="coiled-coil region" evidence="4">
    <location>
        <begin position="216"/>
        <end position="257"/>
    </location>
</feature>
<feature type="short sequence motif" description="PPXY motif" evidence="9">
    <location>
        <begin position="202"/>
        <end position="205"/>
    </location>
</feature>
<feature type="short sequence motif" description="PTAP/PSAP motif" evidence="9">
    <location>
        <begin position="210"/>
        <end position="213"/>
    </location>
</feature>
<feature type="compositionally biased region" description="Polar residues" evidence="8">
    <location>
        <begin position="113"/>
        <end position="125"/>
    </location>
</feature>
<feature type="compositionally biased region" description="Polar residues" evidence="8">
    <location>
        <begin position="140"/>
        <end position="152"/>
    </location>
</feature>
<feature type="active site" description="Protease; shared with dimeric partner" evidence="7">
    <location>
        <position position="785"/>
    </location>
</feature>
<feature type="site" description="Cleavage; by viral protease" evidence="1">
    <location>
        <begin position="100"/>
        <end position="101"/>
    </location>
</feature>
<feature type="site" description="Cleavage; by viral protease" evidence="1">
    <location>
        <begin position="161"/>
        <end position="162"/>
    </location>
</feature>
<feature type="site" description="Cleavage; by viral protease" evidence="1">
    <location>
        <begin position="216"/>
        <end position="217"/>
    </location>
</feature>
<feature type="site" description="Cleavage; by viral protease" evidence="1">
    <location>
        <begin position="299"/>
        <end position="300"/>
    </location>
</feature>
<feature type="site" description="Cleavage; by viral protease" evidence="1">
    <location>
        <begin position="525"/>
        <end position="526"/>
    </location>
</feature>
<feature type="site" description="Cleavage; by viral protease" evidence="15">
    <location>
        <begin position="759"/>
        <end position="760"/>
    </location>
</feature>
<feature type="site" description="Cleavage; by viral protease" evidence="11">
    <location>
        <begin position="873"/>
        <end position="874"/>
    </location>
</feature>
<feature type="mutagenesis site" description="80% loss of virus release." evidence="9">
    <original>PPY</original>
    <variation>GAA</variation>
    <location>
        <begin position="203"/>
        <end position="205"/>
    </location>
</feature>
<feature type="mutagenesis site" description="30% loss of virus release." evidence="9">
    <original>PS</original>
    <variation>AG</variation>
    <location>
        <begin position="210"/>
        <end position="211"/>
    </location>
</feature>
<feature type="mutagenesis site" description="Accelerated processing of the protease C-terminus." evidence="11">
    <original>N</original>
    <variation>I</variation>
    <location>
        <position position="868"/>
    </location>
</feature>
<feature type="mutagenesis site" description="30% loss of infectivity." evidence="11">
    <original>A</original>
    <variation>R</variation>
    <location>
        <position position="873"/>
    </location>
</feature>
<feature type="mutagenesis site" description="Accelerated processing of the protease C-terminus. 50% loss of RT activity." evidence="11">
    <original>Q</original>
    <variation>I</variation>
    <location>
        <position position="874"/>
    </location>
</feature>
<feature type="mutagenesis site" description="85% loss of infectivity and 65% loss of RT activity." evidence="13">
    <original>G</original>
    <variation>A</variation>
    <location>
        <position position="879"/>
    </location>
</feature>
<feature type="mutagenesis site" description="90% loss of infectivity and 65% loss of RT activity." evidence="13">
    <original>Y</original>
    <variation>A</variation>
    <location>
        <position position="880"/>
    </location>
</feature>
<feature type="mutagenesis site" description="Defective in nucleic acid binding. 80% loss of infectivity. 50% loss of RT activity." evidence="11">
    <original>Y</original>
    <variation>S</variation>
    <location>
        <position position="880"/>
    </location>
</feature>
<feature type="mutagenesis site" description="90% loss of infectivity and 55% loss of RT activity." evidence="13">
    <original>G</original>
    <variation>A</variation>
    <location>
        <position position="883"/>
    </location>
</feature>
<feature type="mutagenesis site" description="70% loss of infectivity and 60% loss of RT activity." evidence="13">
    <original>G</original>
    <variation>A</variation>
    <location>
        <position position="885"/>
    </location>
</feature>
<feature type="mutagenesis site" description="85% loss of infectivity and 60% loss of RT activity." evidence="13">
    <original>L</original>
    <variation>A</variation>
    <location>
        <position position="886"/>
    </location>
</feature>
<feature type="mutagenesis site" description="95% loss of infectivity and 95% loss of RT activity." evidence="13">
    <original>G</original>
    <variation>A</variation>
    <location>
        <position position="887"/>
    </location>
</feature>
<feature type="mutagenesis site" description="85% loss of infectivity and 60% loss of RT activity." evidence="13">
    <original>G</original>
    <variation>A</variation>
    <location>
        <position position="892"/>
    </location>
</feature>
<feature type="mutagenesis site" description="60% loss of infectivity and 35% loss of RT activity." evidence="13">
    <original>G</original>
    <variation>A</variation>
    <location>
        <position position="907"/>
    </location>
</feature>
<feature type="helix" evidence="29">
    <location>
        <begin position="635"/>
        <end position="637"/>
    </location>
</feature>
<feature type="strand" evidence="29">
    <location>
        <begin position="646"/>
        <end position="651"/>
    </location>
</feature>
<feature type="strand" evidence="29">
    <location>
        <begin position="656"/>
        <end position="658"/>
    </location>
</feature>
<feature type="helix" evidence="29">
    <location>
        <begin position="660"/>
        <end position="662"/>
    </location>
</feature>
<feature type="strand" evidence="29">
    <location>
        <begin position="665"/>
        <end position="667"/>
    </location>
</feature>
<feature type="strand" evidence="29">
    <location>
        <begin position="670"/>
        <end position="672"/>
    </location>
</feature>
<feature type="strand" evidence="29">
    <location>
        <begin position="679"/>
        <end position="685"/>
    </location>
</feature>
<feature type="helix" evidence="29">
    <location>
        <begin position="687"/>
        <end position="690"/>
    </location>
</feature>
<feature type="turn" evidence="29">
    <location>
        <begin position="691"/>
        <end position="693"/>
    </location>
</feature>
<feature type="strand" evidence="29">
    <location>
        <begin position="694"/>
        <end position="696"/>
    </location>
</feature>
<feature type="strand" evidence="29">
    <location>
        <begin position="699"/>
        <end position="701"/>
    </location>
</feature>
<feature type="strand" evidence="29">
    <location>
        <begin position="711"/>
        <end position="718"/>
    </location>
</feature>
<feature type="strand" evidence="29">
    <location>
        <begin position="720"/>
        <end position="722"/>
    </location>
</feature>
<feature type="strand" evidence="29">
    <location>
        <begin position="727"/>
        <end position="735"/>
    </location>
</feature>
<feature type="strand" evidence="27">
    <location>
        <begin position="766"/>
        <end position="769"/>
    </location>
</feature>
<feature type="strand" evidence="28">
    <location>
        <begin position="770"/>
        <end position="775"/>
    </location>
</feature>
<feature type="strand" evidence="28">
    <location>
        <begin position="778"/>
        <end position="784"/>
    </location>
</feature>
<feature type="strand" evidence="28">
    <location>
        <begin position="792"/>
        <end position="794"/>
    </location>
</feature>
<feature type="helix" evidence="28">
    <location>
        <begin position="795"/>
        <end position="797"/>
    </location>
</feature>
<feature type="strand" evidence="28">
    <location>
        <begin position="804"/>
        <end position="806"/>
    </location>
</feature>
<feature type="strand" evidence="27">
    <location>
        <begin position="808"/>
        <end position="811"/>
    </location>
</feature>
<feature type="helix" evidence="28">
    <location>
        <begin position="816"/>
        <end position="818"/>
    </location>
</feature>
<feature type="strand" evidence="28">
    <location>
        <begin position="821"/>
        <end position="825"/>
    </location>
</feature>
<feature type="strand" evidence="28">
    <location>
        <begin position="827"/>
        <end position="830"/>
    </location>
</feature>
<feature type="turn" evidence="27">
    <location>
        <begin position="832"/>
        <end position="834"/>
    </location>
</feature>
<feature type="strand" evidence="28">
    <location>
        <begin position="836"/>
        <end position="839"/>
    </location>
</feature>
<feature type="strand" evidence="28">
    <location>
        <begin position="842"/>
        <end position="844"/>
    </location>
</feature>
<feature type="helix" evidence="28">
    <location>
        <begin position="854"/>
        <end position="857"/>
    </location>
</feature>
<name>PRO_MPMV</name>
<evidence type="ECO:0000250" key="1">
    <source>
        <dbReference type="UniProtKB" id="P07567"/>
    </source>
</evidence>
<evidence type="ECO:0000250" key="2">
    <source>
        <dbReference type="UniProtKB" id="P10258"/>
    </source>
</evidence>
<evidence type="ECO:0000250" key="3">
    <source>
        <dbReference type="UniProtKB" id="P10271"/>
    </source>
</evidence>
<evidence type="ECO:0000255" key="4"/>
<evidence type="ECO:0000255" key="5">
    <source>
        <dbReference type="PROSITE-ProRule" id="PRU00047"/>
    </source>
</evidence>
<evidence type="ECO:0000255" key="6">
    <source>
        <dbReference type="PROSITE-ProRule" id="PRU00092"/>
    </source>
</evidence>
<evidence type="ECO:0000255" key="7">
    <source>
        <dbReference type="PROSITE-ProRule" id="PRU00275"/>
    </source>
</evidence>
<evidence type="ECO:0000256" key="8">
    <source>
        <dbReference type="SAM" id="MobiDB-lite"/>
    </source>
</evidence>
<evidence type="ECO:0000269" key="9">
    <source>
    </source>
</evidence>
<evidence type="ECO:0000269" key="10">
    <source>
    </source>
</evidence>
<evidence type="ECO:0000269" key="11">
    <source>
    </source>
</evidence>
<evidence type="ECO:0000269" key="12">
    <source>
    </source>
</evidence>
<evidence type="ECO:0000269" key="13">
    <source>
    </source>
</evidence>
<evidence type="ECO:0000269" key="14">
    <source>
    </source>
</evidence>
<evidence type="ECO:0000269" key="15">
    <source>
    </source>
</evidence>
<evidence type="ECO:0000303" key="16">
    <source>
    </source>
</evidence>
<evidence type="ECO:0000303" key="17">
    <source>
    </source>
</evidence>
<evidence type="ECO:0000305" key="18"/>
<evidence type="ECO:0000305" key="19">
    <source>
    </source>
</evidence>
<evidence type="ECO:0000305" key="20">
    <source>
    </source>
</evidence>
<evidence type="ECO:0000312" key="21">
    <source>
        <dbReference type="EMBL" id="AAC82574.1"/>
    </source>
</evidence>
<evidence type="ECO:0007744" key="22">
    <source>
        <dbReference type="PDB" id="1NSO"/>
    </source>
</evidence>
<evidence type="ECO:0007744" key="23">
    <source>
        <dbReference type="PDB" id="2D4L"/>
    </source>
</evidence>
<evidence type="ECO:0007744" key="24">
    <source>
        <dbReference type="PDB" id="2D4M"/>
    </source>
</evidence>
<evidence type="ECO:0007744" key="25">
    <source>
        <dbReference type="PDB" id="2D4N"/>
    </source>
</evidence>
<evidence type="ECO:0007744" key="26">
    <source>
        <dbReference type="PDB" id="6HWI"/>
    </source>
</evidence>
<evidence type="ECO:0007829" key="27">
    <source>
        <dbReference type="PDB" id="1NSO"/>
    </source>
</evidence>
<evidence type="ECO:0007829" key="28">
    <source>
        <dbReference type="PDB" id="3SQF"/>
    </source>
</evidence>
<evidence type="ECO:0007829" key="29">
    <source>
        <dbReference type="PDB" id="3TQ5"/>
    </source>
</evidence>
<organism>
    <name type="scientific">Mason-Pfizer monkey virus</name>
    <name type="common">MPMV</name>
    <name type="synonym">Simian Mason-Pfizer virus</name>
    <dbReference type="NCBI Taxonomy" id="11855"/>
    <lineage>
        <taxon>Viruses</taxon>
        <taxon>Riboviria</taxon>
        <taxon>Pararnavirae</taxon>
        <taxon>Artverviricota</taxon>
        <taxon>Revtraviricetes</taxon>
        <taxon>Ortervirales</taxon>
        <taxon>Retroviridae</taxon>
        <taxon>Orthoretrovirinae</taxon>
        <taxon>Betaretrovirus</taxon>
    </lineage>
</organism>
<gene>
    <name type="primary">gag-pro</name>
</gene>
<reference key="1">
    <citation type="journal article" date="1986" name="Cell">
        <title>Nucleotide sequence of Mason-Pfizer monkey virus: an immunosuppressive D-type retrovirus.</title>
        <authorList>
            <person name="Sonigo P."/>
            <person name="Barker C."/>
            <person name="Hunter E."/>
            <person name="Wain-Hobson S."/>
        </authorList>
    </citation>
    <scope>NUCLEOTIDE SEQUENCE [GENOMIC RNA]</scope>
    <scope>RIBOSOMAL FRAMESHIFT</scope>
    <source>
        <strain>Clone 6A</strain>
    </source>
</reference>
<reference key="2">
    <citation type="submission" date="1997-11" db="EMBL/GenBank/DDBJ databases">
        <authorList>
            <person name="Chappey C."/>
        </authorList>
    </citation>
    <scope>NUCLEOTIDE SEQUENCE [LARGE SCALE GENOMIC DNA]</scope>
</reference>
<reference key="3">
    <citation type="journal article" date="1998" name="Virology">
        <title>Three active forms of aspartic proteinase from Mason-Pfizer monkey virus.</title>
        <authorList>
            <person name="Zabransky A."/>
            <person name="Andreansky M."/>
            <person name="Hruskova-Heidingsfeldova O."/>
            <person name="Havlicek V."/>
            <person name="Hunter E."/>
            <person name="Ruml T."/>
            <person name="Pichova I."/>
        </authorList>
    </citation>
    <scope>PROTEOLYTIC CLEAVAGE (PROTEASE 17 KDA)</scope>
    <scope>CATALYTIC ACTIVITY (PROTEASE 17 KDA)</scope>
    <scope>FUNCTION (PROTEASE 17 KDA)</scope>
    <scope>PROTEOLYTIC CLEAVAGE (GAG-PRO POLYPROTEIN)</scope>
    <scope>SUBCELLULAR LOCATION (PROTEASE 17 KDA)</scope>
    <scope>SUBCELLULAR LOCATION (PROTEASE 13 KDA)</scope>
    <scope>CATALYTIC ACTIVITY (PROTEASE 13 KDA)</scope>
    <scope>FUNCTION (PROTEASE 13 KDA)</scope>
</reference>
<reference key="4">
    <citation type="journal article" date="2003" name="J. Virol.">
        <title>The Mason-Pfizer monkey virus PPPY and PSAP motifs both contribute to virus release.</title>
        <authorList>
            <person name="Gottwein E."/>
            <person name="Bodem J."/>
            <person name="Mueller B."/>
            <person name="Schmechel A."/>
            <person name="Zentgraf H."/>
            <person name="Kraeusslich H.G."/>
        </authorList>
    </citation>
    <scope>DOMAIN (GAG-PRO POLYPROTEIN)</scope>
    <scope>MUTAGENESIS OF 203-PRO--TYR-205 AND 210-PRO--PRO-211</scope>
</reference>
<reference key="5">
    <citation type="journal article" date="2005" name="J. Biol. Chem.">
        <title>The RNA binding G-patch domain in retroviral protease is important for infectivity and D-type morphogenesis of Mason-Pfizer monkey virus.</title>
        <authorList>
            <person name="Bauerova-Zabranska H."/>
            <person name="Stokrova J."/>
            <person name="Strisovsky K."/>
            <person name="Hunter E."/>
            <person name="Ruml T."/>
            <person name="Pichova I."/>
        </authorList>
    </citation>
    <scope>PROTEOLYTIC CLEAVAGE (PROTEASE 17 KDA)</scope>
    <scope>DOMAIN (PROTEASE 17 KDA)</scope>
    <scope>MUTAGENESIS OF ASN-868; ALA-873; GLN-874 AND TYR-880</scope>
</reference>
<reference key="6">
    <citation type="journal article" date="2012" name="J. Virol.">
        <title>The G-patch domain of Mason-Pfizer monkey virus is a part of reverse transcriptase.</title>
        <authorList>
            <person name="Krizova I."/>
            <person name="Hadravova R."/>
            <person name="Stokrova J."/>
            <person name="Guenterova J."/>
            <person name="Dolezal M."/>
            <person name="Ruml T."/>
            <person name="Rumlova M."/>
            <person name="Pichova I."/>
        </authorList>
    </citation>
    <scope>DOMAIN (PROTEASE 17 KDA)</scope>
    <scope>MUTAGENESIS OF GLY-879; TYR-880; GLY-883; GLY-885; LEU-886; GLY-887; GLY-892 AND GLY-907</scope>
    <scope>FUNCTION (G-PATCH PEPTIDE)</scope>
    <scope>INTERACTION WITH THE REVERSE TRANSCRIPTASE/RIBONUCLEASE H (G-PATCH PEPTIDE)</scope>
</reference>
<reference key="7">
    <citation type="journal article" date="2013" name="Biomed. Res. Int.">
        <title>A genome-wide analysis of RNA pseudoknots that stimulate efficient -1 ribosomal frameshifting or readthrough in animal viruses.</title>
        <authorList>
            <person name="Huang X."/>
            <person name="Cheng Q."/>
            <person name="Du Z."/>
        </authorList>
    </citation>
    <scope>RIBOSOMAL FRAMESHIFT</scope>
</reference>
<reference evidence="22" key="8">
    <citation type="journal article" date="2003" name="J. Mol. Biol.">
        <title>Three-dimensional structure of a monomeric form of a retroviral protease.</title>
        <authorList>
            <person name="Veverka V."/>
            <person name="Bauerova H."/>
            <person name="Zabransky A."/>
            <person name="Lang J."/>
            <person name="Ruml T."/>
            <person name="Pichova I."/>
            <person name="Hrabal R."/>
        </authorList>
    </citation>
    <scope>STRUCTURE BY NMR OF 163-269</scope>
    <scope>PROTEOLYTIC CLEAVAGE (PROTEASE 17 KDA)</scope>
</reference>
<reference evidence="23 24 25" key="9">
    <citation type="journal article" date="2007" name="Nucleic Acids Res.">
        <title>Flexible segments modulate co-folding of dUTPase and nucleocapsid proteins.</title>
        <authorList>
            <person name="Nemeth-Pongracz V."/>
            <person name="Barabas O."/>
            <person name="Fuxreiter M."/>
            <person name="Simon I."/>
            <person name="Pichova I."/>
            <person name="Rumlova M."/>
            <person name="Zabranska H."/>
            <person name="Svergun D."/>
            <person name="Petoukhov M."/>
            <person name="Harmat V."/>
            <person name="Klement E."/>
            <person name="Hunyadi-Gulyas E."/>
            <person name="Medzihradszky K.F."/>
            <person name="Konya E."/>
            <person name="Vertessy B.G."/>
        </authorList>
    </citation>
    <scope>X-RAY CRYSTALLOGRAPHY (1.53 ANGSTROMS) OF 12-162</scope>
    <scope>CATALYTIC ACTIVITY (NUCLEOCAPSID PROTEIN-DUTPASE)</scope>
    <scope>SUBUNIT (NUCLEOCAPSID PROTEIN-DUTPASE)</scope>
</reference>
<reference evidence="26" key="10">
    <citation type="journal article" date="2018" name="Proc. Natl. Acad. Sci. U.S.A.">
        <title>Structure and architecture of immature and mature murine leukemia virus capsids.</title>
        <authorList>
            <person name="Qu K."/>
            <person name="Glass B."/>
            <person name="Dolezal M."/>
            <person name="Schur F.K.M."/>
            <person name="Murciano B."/>
            <person name="Rein A."/>
            <person name="Rumlova M."/>
            <person name="Ruml T."/>
            <person name="Kraeusslich H.G."/>
            <person name="Briggs J.A.G."/>
        </authorList>
    </citation>
    <scope>STRUCTURE BY ELECTRON MICROSCOPY (7.20 ANGSTROMS) OF 317-516</scope>
    <scope>DOMAIN (CAPSID PROTEIN P27)</scope>
</reference>
<sequence>MGQELSQHERYVEQLKQALKTRGVKVKYADLLKFFDFVKDTCPWFPQEGTIDIKRWRRVGDCFQDYYNTFGPEKVPVTAFSYWNLIKELIDKKEVNPQVMAAVAQTEEILKSNSQTDLTKTSQNPDLDLISLDSDDEGAKSSSLQDKGLSSTKKPKRFPVLLTAQTSKDPEDPNPSEVDWDGLEDEAAKYHNPDWPPFLTRPPPYNKATPSAPTVMAVVNPKEELKEKIAQLEEQIKLEELHQALISKLQKLKTGNETVTHPDTAGGLSRTPHWPGQHIPKGKCCASREKEEQIPKDIFPVTETVDGQGQAWRHHNGFDFAVIKELKTAASQYGATAPYTLAIVESVADNWLTPTDWNTLVRAVLSGGDHLLWKSEFFENCRDTAKRNQQAGNGWDFDMLTGSGNYSSTDAQMQYDPGLFAQIQAAATKAWRKLPVKGDPGASLTGVKQGPDEPFADFVHRLITTAGRIFGSAEAGVDYVKQLAYENANPACQAAIRPYRKKTDLTGYIRLCSDIGPSYQQGLAMAAAFSGQTVKDFLNNKNKEKGGCCFKCGKKGHFAKNCHEHAHNNAEPKVPGLCPRCKRGKHWANECKSKTDNQGNPIPPHQGNRVEGPAPGPETSLWGSQLCSSQQKQPISKLTRATPGSAGLDLCSTSHTVLTPEMGPQALSTGIYGPLPPNTFGLILGRSSITMKGLQVYPGVIDNDYTGEIKIMAKAVNNIVTVSQGNRIAQLILLPLIETDNKVQQPYRGQGSFGSSDIYWVQPITCQKPSLTLWLDDKMFTGLIDTGADVTIIKLEDWPPNWPITDTLTNLRGIGQSNNPKQSSKYLTWRDKENNSGLIKPFVIPNLPVNLWGRDLLSQMKIMMCSPNDIVTAQMLAQGYSPGKGLGKKENGILHPIPNQGQSNKKGFGNF</sequence>
<protein>
    <recommendedName>
        <fullName>Gag-Pro polyprotein</fullName>
    </recommendedName>
    <alternativeName>
        <fullName evidence="21">Pr95</fullName>
    </alternativeName>
    <component>
        <recommendedName>
            <fullName>Matrix protein p10</fullName>
        </recommendedName>
    </component>
    <component>
        <recommendedName>
            <fullName>Phosphorylated protein pp24</fullName>
        </recommendedName>
    </component>
    <component>
        <recommendedName>
            <fullName>Phosphorylated protein pp18</fullName>
        </recommendedName>
    </component>
    <component>
        <recommendedName>
            <fullName>p12</fullName>
        </recommendedName>
    </component>
    <component>
        <recommendedName>
            <fullName>Capsid protein p27</fullName>
        </recommendedName>
    </component>
    <component>
        <recommendedName>
            <fullName>Nucleocapsid protein-dUTPase</fullName>
            <shortName>NC-dUTPase</shortName>
            <ecNumber evidence="12">3.6.1.23</ecNumber>
        </recommendedName>
    </component>
    <component>
        <recommendedName>
            <fullName evidence="16">Protease 17 kDa</fullName>
            <ecNumber evidence="7 15">3.4.23.-</ecNumber>
        </recommendedName>
    </component>
    <component>
        <recommendedName>
            <fullName evidence="16">Protease 13 kDa</fullName>
            <ecNumber evidence="7 15">3.4.23.-</ecNumber>
        </recommendedName>
    </component>
    <component>
        <recommendedName>
            <fullName evidence="17">G-patch peptide</fullName>
        </recommendedName>
    </component>
</protein>
<organismHost>
    <name type="scientific">Macaca mulatta</name>
    <name type="common">Rhesus macaque</name>
    <dbReference type="NCBI Taxonomy" id="9544"/>
</organismHost>
<keyword id="KW-0002">3D-structure</keyword>
<keyword id="KW-0064">Aspartyl protease</keyword>
<keyword id="KW-0167">Capsid protein</keyword>
<keyword id="KW-0175">Coiled coil</keyword>
<keyword id="KW-0238">DNA-binding</keyword>
<keyword id="KW-0378">Hydrolase</keyword>
<keyword id="KW-0449">Lipoprotein</keyword>
<keyword id="KW-0460">Magnesium</keyword>
<keyword id="KW-0479">Metal-binding</keyword>
<keyword id="KW-0519">Myristate</keyword>
<keyword id="KW-0546">Nucleotide metabolism</keyword>
<keyword id="KW-0645">Protease</keyword>
<keyword id="KW-0677">Repeat</keyword>
<keyword id="KW-0688">Ribosomal frameshifting</keyword>
<keyword id="KW-0468">Viral matrix protein</keyword>
<keyword id="KW-0543">Viral nucleoprotein</keyword>
<keyword id="KW-0946">Virion</keyword>
<keyword id="KW-0862">Zinc</keyword>
<keyword id="KW-0863">Zinc-finger</keyword>